<gene>
    <name type="primary">kex1</name>
    <name type="ORF">NFIA_016700</name>
</gene>
<accession>A1D3I1</accession>
<protein>
    <recommendedName>
        <fullName>Pheromone-processing carboxypeptidase kex1</fullName>
        <ecNumber>3.4.16.6</ecNumber>
    </recommendedName>
    <alternativeName>
        <fullName>Carboxypeptidase D</fullName>
    </alternativeName>
</protein>
<organism>
    <name type="scientific">Neosartorya fischeri (strain ATCC 1020 / DSM 3700 / CBS 544.65 / FGSC A1164 / JCM 1740 / NRRL 181 / WB 181)</name>
    <name type="common">Aspergillus fischerianus</name>
    <dbReference type="NCBI Taxonomy" id="331117"/>
    <lineage>
        <taxon>Eukaryota</taxon>
        <taxon>Fungi</taxon>
        <taxon>Dikarya</taxon>
        <taxon>Ascomycota</taxon>
        <taxon>Pezizomycotina</taxon>
        <taxon>Eurotiomycetes</taxon>
        <taxon>Eurotiomycetidae</taxon>
        <taxon>Eurotiales</taxon>
        <taxon>Aspergillaceae</taxon>
        <taxon>Aspergillus</taxon>
        <taxon>Aspergillus subgen. Fumigati</taxon>
    </lineage>
</organism>
<evidence type="ECO:0000250" key="1"/>
<evidence type="ECO:0000255" key="2"/>
<evidence type="ECO:0000255" key="3">
    <source>
        <dbReference type="PROSITE-ProRule" id="PRU10074"/>
    </source>
</evidence>
<evidence type="ECO:0000256" key="4">
    <source>
        <dbReference type="SAM" id="MobiDB-lite"/>
    </source>
</evidence>
<evidence type="ECO:0000305" key="5"/>
<name>KEX1_NEOFI</name>
<keyword id="KW-0053">Apoptosis</keyword>
<keyword id="KW-0121">Carboxypeptidase</keyword>
<keyword id="KW-0325">Glycoprotein</keyword>
<keyword id="KW-0333">Golgi apparatus</keyword>
<keyword id="KW-0378">Hydrolase</keyword>
<keyword id="KW-0472">Membrane</keyword>
<keyword id="KW-0645">Protease</keyword>
<keyword id="KW-1185">Reference proteome</keyword>
<keyword id="KW-0732">Signal</keyword>
<keyword id="KW-0812">Transmembrane</keyword>
<keyword id="KW-1133">Transmembrane helix</keyword>
<feature type="signal peptide" evidence="2">
    <location>
        <begin position="1"/>
        <end position="38"/>
    </location>
</feature>
<feature type="chain" id="PRO_0000411929" description="Pheromone-processing carboxypeptidase kex1">
    <location>
        <begin position="39"/>
        <end position="632"/>
    </location>
</feature>
<feature type="topological domain" description="Lumenal" evidence="2">
    <location>
        <begin position="39"/>
        <end position="523"/>
    </location>
</feature>
<feature type="transmembrane region" description="Helical" evidence="2">
    <location>
        <begin position="524"/>
        <end position="544"/>
    </location>
</feature>
<feature type="topological domain" description="Cytoplasmic" evidence="2">
    <location>
        <begin position="545"/>
        <end position="632"/>
    </location>
</feature>
<feature type="region of interest" description="Disordered" evidence="4">
    <location>
        <begin position="480"/>
        <end position="507"/>
    </location>
</feature>
<feature type="region of interest" description="Disordered" evidence="4">
    <location>
        <begin position="568"/>
        <end position="632"/>
    </location>
</feature>
<feature type="compositionally biased region" description="Polar residues" evidence="4">
    <location>
        <begin position="492"/>
        <end position="506"/>
    </location>
</feature>
<feature type="compositionally biased region" description="Acidic residues" evidence="4">
    <location>
        <begin position="581"/>
        <end position="590"/>
    </location>
</feature>
<feature type="active site" evidence="3">
    <location>
        <position position="190"/>
    </location>
</feature>
<feature type="active site" evidence="3">
    <location>
        <position position="390"/>
    </location>
</feature>
<feature type="active site" evidence="3">
    <location>
        <position position="452"/>
    </location>
</feature>
<feature type="glycosylation site" description="N-linked (GlcNAc...) asparagine" evidence="2">
    <location>
        <position position="119"/>
    </location>
</feature>
<feature type="glycosylation site" description="N-linked (GlcNAc...) asparagine" evidence="2">
    <location>
        <position position="126"/>
    </location>
</feature>
<feature type="glycosylation site" description="N-linked (GlcNAc...) asparagine" evidence="2">
    <location>
        <position position="441"/>
    </location>
</feature>
<feature type="glycosylation site" description="N-linked (GlcNAc...) asparagine" evidence="2">
    <location>
        <position position="449"/>
    </location>
</feature>
<feature type="glycosylation site" description="N-linked (GlcNAc...) asparagine" evidence="2">
    <location>
        <position position="501"/>
    </location>
</feature>
<dbReference type="EC" id="3.4.16.6"/>
<dbReference type="EMBL" id="DS027688">
    <property type="protein sequence ID" value="EAW22974.1"/>
    <property type="molecule type" value="Genomic_DNA"/>
</dbReference>
<dbReference type="RefSeq" id="XP_001264871.1">
    <property type="nucleotide sequence ID" value="XM_001264870.1"/>
</dbReference>
<dbReference type="SMR" id="A1D3I1"/>
<dbReference type="STRING" id="331117.A1D3I1"/>
<dbReference type="ESTHER" id="aspfu-kex1">
    <property type="family name" value="Carboxypeptidase_S10"/>
</dbReference>
<dbReference type="MEROPS" id="S10.007"/>
<dbReference type="GlyCosmos" id="A1D3I1">
    <property type="glycosylation" value="5 sites, No reported glycans"/>
</dbReference>
<dbReference type="EnsemblFungi" id="EAW22974">
    <property type="protein sequence ID" value="EAW22974"/>
    <property type="gene ID" value="NFIA_016700"/>
</dbReference>
<dbReference type="GeneID" id="4591422"/>
<dbReference type="KEGG" id="nfi:NFIA_016700"/>
<dbReference type="VEuPathDB" id="FungiDB:NFIA_016700"/>
<dbReference type="eggNOG" id="KOG1282">
    <property type="taxonomic scope" value="Eukaryota"/>
</dbReference>
<dbReference type="HOGENOM" id="CLU_008523_11_0_1"/>
<dbReference type="OMA" id="EMADQFV"/>
<dbReference type="OrthoDB" id="443318at2759"/>
<dbReference type="Proteomes" id="UP000006702">
    <property type="component" value="Unassembled WGS sequence"/>
</dbReference>
<dbReference type="GO" id="GO:0016020">
    <property type="term" value="C:membrane"/>
    <property type="evidence" value="ECO:0007669"/>
    <property type="project" value="UniProtKB-KW"/>
</dbReference>
<dbReference type="GO" id="GO:0005802">
    <property type="term" value="C:trans-Golgi network"/>
    <property type="evidence" value="ECO:0007669"/>
    <property type="project" value="TreeGrafter"/>
</dbReference>
<dbReference type="GO" id="GO:0004185">
    <property type="term" value="F:serine-type carboxypeptidase activity"/>
    <property type="evidence" value="ECO:0007669"/>
    <property type="project" value="UniProtKB-EC"/>
</dbReference>
<dbReference type="GO" id="GO:0006915">
    <property type="term" value="P:apoptotic process"/>
    <property type="evidence" value="ECO:0007669"/>
    <property type="project" value="UniProtKB-KW"/>
</dbReference>
<dbReference type="GO" id="GO:0006508">
    <property type="term" value="P:proteolysis"/>
    <property type="evidence" value="ECO:0007669"/>
    <property type="project" value="UniProtKB-KW"/>
</dbReference>
<dbReference type="FunFam" id="3.40.50.1820:FF:000121">
    <property type="entry name" value="Carboxypeptidase D"/>
    <property type="match status" value="1"/>
</dbReference>
<dbReference type="Gene3D" id="3.40.50.1820">
    <property type="entry name" value="alpha/beta hydrolase"/>
    <property type="match status" value="1"/>
</dbReference>
<dbReference type="InterPro" id="IPR029058">
    <property type="entry name" value="AB_hydrolase_fold"/>
</dbReference>
<dbReference type="InterPro" id="IPR001563">
    <property type="entry name" value="Peptidase_S10"/>
</dbReference>
<dbReference type="InterPro" id="IPR018202">
    <property type="entry name" value="Ser_caboxypep_ser_AS"/>
</dbReference>
<dbReference type="PANTHER" id="PTHR11802:SF190">
    <property type="entry name" value="PHEROMONE-PROCESSING CARBOXYPEPTIDASE KEX1"/>
    <property type="match status" value="1"/>
</dbReference>
<dbReference type="PANTHER" id="PTHR11802">
    <property type="entry name" value="SERINE PROTEASE FAMILY S10 SERINE CARBOXYPEPTIDASE"/>
    <property type="match status" value="1"/>
</dbReference>
<dbReference type="Pfam" id="PF00450">
    <property type="entry name" value="Peptidase_S10"/>
    <property type="match status" value="1"/>
</dbReference>
<dbReference type="PRINTS" id="PR00724">
    <property type="entry name" value="CRBOXYPTASEC"/>
</dbReference>
<dbReference type="SUPFAM" id="SSF53474">
    <property type="entry name" value="alpha/beta-Hydrolases"/>
    <property type="match status" value="1"/>
</dbReference>
<dbReference type="PROSITE" id="PS00131">
    <property type="entry name" value="CARBOXYPEPT_SER_SER"/>
    <property type="match status" value="1"/>
</dbReference>
<reference key="1">
    <citation type="journal article" date="2008" name="PLoS Genet.">
        <title>Genomic islands in the pathogenic filamentous fungus Aspergillus fumigatus.</title>
        <authorList>
            <person name="Fedorova N.D."/>
            <person name="Khaldi N."/>
            <person name="Joardar V.S."/>
            <person name="Maiti R."/>
            <person name="Amedeo P."/>
            <person name="Anderson M.J."/>
            <person name="Crabtree J."/>
            <person name="Silva J.C."/>
            <person name="Badger J.H."/>
            <person name="Albarraq A."/>
            <person name="Angiuoli S."/>
            <person name="Bussey H."/>
            <person name="Bowyer P."/>
            <person name="Cotty P.J."/>
            <person name="Dyer P.S."/>
            <person name="Egan A."/>
            <person name="Galens K."/>
            <person name="Fraser-Liggett C.M."/>
            <person name="Haas B.J."/>
            <person name="Inman J.M."/>
            <person name="Kent R."/>
            <person name="Lemieux S."/>
            <person name="Malavazi I."/>
            <person name="Orvis J."/>
            <person name="Roemer T."/>
            <person name="Ronning C.M."/>
            <person name="Sundaram J.P."/>
            <person name="Sutton G."/>
            <person name="Turner G."/>
            <person name="Venter J.C."/>
            <person name="White O.R."/>
            <person name="Whitty B.R."/>
            <person name="Youngman P."/>
            <person name="Wolfe K.H."/>
            <person name="Goldman G.H."/>
            <person name="Wortman J.R."/>
            <person name="Jiang B."/>
            <person name="Denning D.W."/>
            <person name="Nierman W.C."/>
        </authorList>
    </citation>
    <scope>NUCLEOTIDE SEQUENCE [LARGE SCALE GENOMIC DNA]</scope>
    <source>
        <strain>ATCC 1020 / DSM 3700 / CBS 544.65 / FGSC A1164 / JCM 1740 / NRRL 181 / WB 181</strain>
    </source>
</reference>
<proteinExistence type="inferred from homology"/>
<comment type="function">
    <text evidence="1">Protease with a carboxypeptidase B-like function involved in the C-terminal processing of the lysine and arginine residues from protein precursors. Promotes cell fusion and is involved in the programmed cell death (By similarity).</text>
</comment>
<comment type="catalytic activity">
    <reaction>
        <text>Preferential release of a C-terminal arginine or lysine residue.</text>
        <dbReference type="EC" id="3.4.16.6"/>
    </reaction>
</comment>
<comment type="subcellular location">
    <subcellularLocation>
        <location evidence="1">Golgi apparatus</location>
        <location evidence="1">trans-Golgi network membrane</location>
        <topology evidence="1">Single-pass type I membrane protein</topology>
    </subcellularLocation>
</comment>
<comment type="similarity">
    <text evidence="5">Belongs to the peptidase S10 family.</text>
</comment>
<sequence>MLLTAPSSRGSRTQSGIANVSWWALSLLLLFSPTLVSAKSAADYYVRSLPGAPEGPLLKMHAGHIEVDAQNNGNLFFWHYQNRHIANRQRTVIWLNGGPGCSSMDGALMEIGPYRLKDNHTLEYNNGSWDEFANLLFVDQPVGTGFSYVSTNSYIHELDEMSAQFITFLEKWFQLFPEYEGDDIYIAGESYAGQHIPYIAKAIQERNNKIQNDQSVRWNLRGIVIGNGWISPAQQYPSYLTFAYEEGLVTEGSSLAKDLEVYQSVCESKISASPNAINIRDCEEILQQILARTKDTNRQCYNMYDVRLRDTYPSCGMNWPTDLVDVKPYLQRPDVVQALNINPEKKSGWEECSGAVSSTFNAANSLPSVQLLPELLESGIPILLFSGDKDLICNHVGTEQLINNMKWNGGTGFETSPGVWAPRHDWTFEGEPTGIYQYARNLTYVLFYNASHMVPYDLPRQSRDMLDRFMKVDIANIGGKPADSRIDGEKLPQTSVGGHPNSTAAEQQAKEKIKETEWKAYAKSGEAALIVVIIGVTVWGFFIWRSRRRNRGYQGVYQRDVGSGSILERFHNKRSGPADVEAGDFDESELDNLHSPGPEQEHYAVGDDSDEEGPNHHPAAPPSSTKPGGAQP</sequence>